<keyword id="KW-0120">Carbon dioxide fixation</keyword>
<keyword id="KW-0456">Lyase</keyword>
<keyword id="KW-0460">Magnesium</keyword>
<keyword id="KW-1185">Reference proteome</keyword>
<dbReference type="EC" id="4.1.1.31" evidence="1"/>
<dbReference type="EMBL" id="CP000821">
    <property type="protein sequence ID" value="ABV38882.1"/>
    <property type="molecule type" value="Genomic_DNA"/>
</dbReference>
<dbReference type="RefSeq" id="WP_012144611.1">
    <property type="nucleotide sequence ID" value="NC_009831.1"/>
</dbReference>
<dbReference type="SMR" id="A8G1A9"/>
<dbReference type="STRING" id="425104.Ssed_4278"/>
<dbReference type="KEGG" id="sse:Ssed_4278"/>
<dbReference type="eggNOG" id="COG2352">
    <property type="taxonomic scope" value="Bacteria"/>
</dbReference>
<dbReference type="HOGENOM" id="CLU_006557_2_0_6"/>
<dbReference type="OrthoDB" id="9768133at2"/>
<dbReference type="Proteomes" id="UP000002015">
    <property type="component" value="Chromosome"/>
</dbReference>
<dbReference type="GO" id="GO:0005829">
    <property type="term" value="C:cytosol"/>
    <property type="evidence" value="ECO:0007669"/>
    <property type="project" value="TreeGrafter"/>
</dbReference>
<dbReference type="GO" id="GO:0000287">
    <property type="term" value="F:magnesium ion binding"/>
    <property type="evidence" value="ECO:0007669"/>
    <property type="project" value="UniProtKB-UniRule"/>
</dbReference>
<dbReference type="GO" id="GO:0008964">
    <property type="term" value="F:phosphoenolpyruvate carboxylase activity"/>
    <property type="evidence" value="ECO:0007669"/>
    <property type="project" value="UniProtKB-UniRule"/>
</dbReference>
<dbReference type="GO" id="GO:0015977">
    <property type="term" value="P:carbon fixation"/>
    <property type="evidence" value="ECO:0007669"/>
    <property type="project" value="UniProtKB-UniRule"/>
</dbReference>
<dbReference type="GO" id="GO:0006107">
    <property type="term" value="P:oxaloacetate metabolic process"/>
    <property type="evidence" value="ECO:0007669"/>
    <property type="project" value="UniProtKB-UniRule"/>
</dbReference>
<dbReference type="GO" id="GO:0006099">
    <property type="term" value="P:tricarboxylic acid cycle"/>
    <property type="evidence" value="ECO:0007669"/>
    <property type="project" value="InterPro"/>
</dbReference>
<dbReference type="Gene3D" id="1.20.1440.90">
    <property type="entry name" value="Phosphoenolpyruvate/pyruvate domain"/>
    <property type="match status" value="1"/>
</dbReference>
<dbReference type="HAMAP" id="MF_00595">
    <property type="entry name" value="PEPcase_type1"/>
    <property type="match status" value="1"/>
</dbReference>
<dbReference type="InterPro" id="IPR021135">
    <property type="entry name" value="PEP_COase"/>
</dbReference>
<dbReference type="InterPro" id="IPR022805">
    <property type="entry name" value="PEP_COase_bac/pln-type"/>
</dbReference>
<dbReference type="InterPro" id="IPR018129">
    <property type="entry name" value="PEP_COase_Lys_AS"/>
</dbReference>
<dbReference type="InterPro" id="IPR033129">
    <property type="entry name" value="PEPCASE_His_AS"/>
</dbReference>
<dbReference type="InterPro" id="IPR015813">
    <property type="entry name" value="Pyrv/PenolPyrv_kinase-like_dom"/>
</dbReference>
<dbReference type="NCBIfam" id="NF000584">
    <property type="entry name" value="PRK00009.1"/>
    <property type="match status" value="1"/>
</dbReference>
<dbReference type="PANTHER" id="PTHR30523">
    <property type="entry name" value="PHOSPHOENOLPYRUVATE CARBOXYLASE"/>
    <property type="match status" value="1"/>
</dbReference>
<dbReference type="PANTHER" id="PTHR30523:SF6">
    <property type="entry name" value="PHOSPHOENOLPYRUVATE CARBOXYLASE"/>
    <property type="match status" value="1"/>
</dbReference>
<dbReference type="Pfam" id="PF00311">
    <property type="entry name" value="PEPcase"/>
    <property type="match status" value="1"/>
</dbReference>
<dbReference type="PRINTS" id="PR00150">
    <property type="entry name" value="PEPCARBXLASE"/>
</dbReference>
<dbReference type="SUPFAM" id="SSF51621">
    <property type="entry name" value="Phosphoenolpyruvate/pyruvate domain"/>
    <property type="match status" value="1"/>
</dbReference>
<dbReference type="PROSITE" id="PS00781">
    <property type="entry name" value="PEPCASE_1"/>
    <property type="match status" value="1"/>
</dbReference>
<dbReference type="PROSITE" id="PS00393">
    <property type="entry name" value="PEPCASE_2"/>
    <property type="match status" value="1"/>
</dbReference>
<gene>
    <name evidence="1" type="primary">ppc</name>
    <name type="ordered locus">Ssed_4278</name>
</gene>
<sequence>MADMYASLRSNVGTLGQILGETIRTNLDDAFLEKIEQIRQLAKSSRQGDEAARDEMLKLLTALPDNELVPFAKAFNQFLNLANIAEQFHTISRNCDELVCVPDPVEQLLGRVLSSNIDQEKMLDCLENLDIDLVLTAHPTEISRRTLIQKYASVIDILAALENPQLTEREKKQQHLRLRQLIAQIWHTNEIRNERPTPVDEARWGLSTIEVSLWQAIPDFLRQLNEQVEERTGKQLPTDIAPVRFSSWMGGDRDGNPFVTAKVTQEVLDRNRHTAARLYLKDIVVLVNDLSVEEANAELLEYTNNSLEPYRDVLKDLRQKLRNTVDYLNARLEGHSPEIDLSSIIWHESDLKEPLLMLYRSLTDSGMSLIAHGLLLDILRRIACFGIHMLRLDIRQDAERHSDVIAELTRYLGMGDYNHWDESEKQAFLLRELTGKRPLIPSNWQPSDDVAEVVSTCRLIATQPARALGSYVISMASKPSDVLTVLLLLKETGCPHPMRVVPLFETLDDLNNASSCMTALFAIDWYRGYTKGHQEVMIGYSDSAKDAGVMAAAWAQYHAQEELVEVSRQAEVKLTLFHGRGGTIGRGGGPAHEAILSQPPGSVDGRIRVTEQGEMIRFKFGLPKLAVQSLALYTSAVMEATLLPPPEPKPEWRACMQKLAEESVDAYRSIVRDEPDFVAYFRAATPEVELGKLPLGSRPAKRRVDGGIESLRAIPWIFAWSQNRLMLPAWLGAGEALQAASDRGEMALLQEMEQDWPFFKTRISMLEMVYAKAEPNLAKYYETCLVPENLHHLGEALRTRLATGIKAVLELTQSNALMEHTPWNRESVTLRNPYIDPLNFVQAELLARTRKEEEASTNVELALMITIAGVAAGMRNTG</sequence>
<feature type="chain" id="PRO_1000082436" description="Phosphoenolpyruvate carboxylase">
    <location>
        <begin position="1"/>
        <end position="878"/>
    </location>
</feature>
<feature type="active site" evidence="1">
    <location>
        <position position="138"/>
    </location>
</feature>
<feature type="active site" evidence="1">
    <location>
        <position position="545"/>
    </location>
</feature>
<proteinExistence type="inferred from homology"/>
<name>CAPP_SHESH</name>
<accession>A8G1A9</accession>
<reference key="1">
    <citation type="submission" date="2007-08" db="EMBL/GenBank/DDBJ databases">
        <title>Complete sequence of Shewanella sediminis HAW-EB3.</title>
        <authorList>
            <consortium name="US DOE Joint Genome Institute"/>
            <person name="Copeland A."/>
            <person name="Lucas S."/>
            <person name="Lapidus A."/>
            <person name="Barry K."/>
            <person name="Glavina del Rio T."/>
            <person name="Dalin E."/>
            <person name="Tice H."/>
            <person name="Pitluck S."/>
            <person name="Chertkov O."/>
            <person name="Brettin T."/>
            <person name="Bruce D."/>
            <person name="Detter J.C."/>
            <person name="Han C."/>
            <person name="Schmutz J."/>
            <person name="Larimer F."/>
            <person name="Land M."/>
            <person name="Hauser L."/>
            <person name="Kyrpides N."/>
            <person name="Kim E."/>
            <person name="Zhao J.-S."/>
            <person name="Richardson P."/>
        </authorList>
    </citation>
    <scope>NUCLEOTIDE SEQUENCE [LARGE SCALE GENOMIC DNA]</scope>
    <source>
        <strain>HAW-EB3</strain>
    </source>
</reference>
<organism>
    <name type="scientific">Shewanella sediminis (strain HAW-EB3)</name>
    <dbReference type="NCBI Taxonomy" id="425104"/>
    <lineage>
        <taxon>Bacteria</taxon>
        <taxon>Pseudomonadati</taxon>
        <taxon>Pseudomonadota</taxon>
        <taxon>Gammaproteobacteria</taxon>
        <taxon>Alteromonadales</taxon>
        <taxon>Shewanellaceae</taxon>
        <taxon>Shewanella</taxon>
    </lineage>
</organism>
<comment type="function">
    <text evidence="1">Forms oxaloacetate, a four-carbon dicarboxylic acid source for the tricarboxylic acid cycle.</text>
</comment>
<comment type="catalytic activity">
    <reaction evidence="1">
        <text>oxaloacetate + phosphate = phosphoenolpyruvate + hydrogencarbonate</text>
        <dbReference type="Rhea" id="RHEA:28370"/>
        <dbReference type="ChEBI" id="CHEBI:16452"/>
        <dbReference type="ChEBI" id="CHEBI:17544"/>
        <dbReference type="ChEBI" id="CHEBI:43474"/>
        <dbReference type="ChEBI" id="CHEBI:58702"/>
        <dbReference type="EC" id="4.1.1.31"/>
    </reaction>
</comment>
<comment type="cofactor">
    <cofactor evidence="1">
        <name>Mg(2+)</name>
        <dbReference type="ChEBI" id="CHEBI:18420"/>
    </cofactor>
</comment>
<comment type="similarity">
    <text evidence="1">Belongs to the PEPCase type 1 family.</text>
</comment>
<protein>
    <recommendedName>
        <fullName evidence="1">Phosphoenolpyruvate carboxylase</fullName>
        <shortName evidence="1">PEPC</shortName>
        <shortName evidence="1">PEPCase</shortName>
        <ecNumber evidence="1">4.1.1.31</ecNumber>
    </recommendedName>
</protein>
<evidence type="ECO:0000255" key="1">
    <source>
        <dbReference type="HAMAP-Rule" id="MF_00595"/>
    </source>
</evidence>